<organism>
    <name type="scientific">Escherichia coli O81 (strain ED1a)</name>
    <dbReference type="NCBI Taxonomy" id="585397"/>
    <lineage>
        <taxon>Bacteria</taxon>
        <taxon>Pseudomonadati</taxon>
        <taxon>Pseudomonadota</taxon>
        <taxon>Gammaproteobacteria</taxon>
        <taxon>Enterobacterales</taxon>
        <taxon>Enterobacteriaceae</taxon>
        <taxon>Escherichia</taxon>
    </lineage>
</organism>
<dbReference type="EC" id="6.3.1.5" evidence="1"/>
<dbReference type="EMBL" id="CU928162">
    <property type="protein sequence ID" value="CAR08135.2"/>
    <property type="molecule type" value="Genomic_DNA"/>
</dbReference>
<dbReference type="RefSeq" id="WP_000175037.1">
    <property type="nucleotide sequence ID" value="NC_011745.1"/>
</dbReference>
<dbReference type="SMR" id="B7MVL9"/>
<dbReference type="KEGG" id="ecq:ECED1_1942"/>
<dbReference type="HOGENOM" id="CLU_059327_3_0_6"/>
<dbReference type="UniPathway" id="UPA00253">
    <property type="reaction ID" value="UER00333"/>
</dbReference>
<dbReference type="Proteomes" id="UP000000748">
    <property type="component" value="Chromosome"/>
</dbReference>
<dbReference type="GO" id="GO:0005737">
    <property type="term" value="C:cytoplasm"/>
    <property type="evidence" value="ECO:0007669"/>
    <property type="project" value="InterPro"/>
</dbReference>
<dbReference type="GO" id="GO:0005524">
    <property type="term" value="F:ATP binding"/>
    <property type="evidence" value="ECO:0007669"/>
    <property type="project" value="UniProtKB-UniRule"/>
</dbReference>
<dbReference type="GO" id="GO:0004359">
    <property type="term" value="F:glutaminase activity"/>
    <property type="evidence" value="ECO:0007669"/>
    <property type="project" value="InterPro"/>
</dbReference>
<dbReference type="GO" id="GO:0046872">
    <property type="term" value="F:metal ion binding"/>
    <property type="evidence" value="ECO:0007669"/>
    <property type="project" value="UniProtKB-KW"/>
</dbReference>
<dbReference type="GO" id="GO:0003952">
    <property type="term" value="F:NAD+ synthase (glutamine-hydrolyzing) activity"/>
    <property type="evidence" value="ECO:0007669"/>
    <property type="project" value="InterPro"/>
</dbReference>
<dbReference type="GO" id="GO:0008795">
    <property type="term" value="F:NAD+ synthase activity"/>
    <property type="evidence" value="ECO:0007669"/>
    <property type="project" value="UniProtKB-UniRule"/>
</dbReference>
<dbReference type="GO" id="GO:0009435">
    <property type="term" value="P:NAD biosynthetic process"/>
    <property type="evidence" value="ECO:0007669"/>
    <property type="project" value="UniProtKB-UniRule"/>
</dbReference>
<dbReference type="CDD" id="cd00553">
    <property type="entry name" value="NAD_synthase"/>
    <property type="match status" value="1"/>
</dbReference>
<dbReference type="FunFam" id="3.40.50.620:FF:000015">
    <property type="entry name" value="NH(3)-dependent NAD(+) synthetase"/>
    <property type="match status" value="1"/>
</dbReference>
<dbReference type="Gene3D" id="3.40.50.620">
    <property type="entry name" value="HUPs"/>
    <property type="match status" value="1"/>
</dbReference>
<dbReference type="HAMAP" id="MF_00193">
    <property type="entry name" value="NadE_ammonia_dep"/>
    <property type="match status" value="1"/>
</dbReference>
<dbReference type="InterPro" id="IPR022310">
    <property type="entry name" value="NAD/GMP_synthase"/>
</dbReference>
<dbReference type="InterPro" id="IPR003694">
    <property type="entry name" value="NAD_synthase"/>
</dbReference>
<dbReference type="InterPro" id="IPR022926">
    <property type="entry name" value="NH(3)-dep_NAD(+)_synth"/>
</dbReference>
<dbReference type="InterPro" id="IPR014729">
    <property type="entry name" value="Rossmann-like_a/b/a_fold"/>
</dbReference>
<dbReference type="NCBIfam" id="TIGR00552">
    <property type="entry name" value="nadE"/>
    <property type="match status" value="1"/>
</dbReference>
<dbReference type="NCBIfam" id="NF001979">
    <property type="entry name" value="PRK00768.1"/>
    <property type="match status" value="1"/>
</dbReference>
<dbReference type="PANTHER" id="PTHR23090">
    <property type="entry name" value="NH 3 /GLUTAMINE-DEPENDENT NAD + SYNTHETASE"/>
    <property type="match status" value="1"/>
</dbReference>
<dbReference type="PANTHER" id="PTHR23090:SF7">
    <property type="entry name" value="NH(3)-DEPENDENT NAD(+) SYNTHETASE"/>
    <property type="match status" value="1"/>
</dbReference>
<dbReference type="Pfam" id="PF02540">
    <property type="entry name" value="NAD_synthase"/>
    <property type="match status" value="1"/>
</dbReference>
<dbReference type="SUPFAM" id="SSF52402">
    <property type="entry name" value="Adenine nucleotide alpha hydrolases-like"/>
    <property type="match status" value="1"/>
</dbReference>
<reference key="1">
    <citation type="journal article" date="2009" name="PLoS Genet.">
        <title>Organised genome dynamics in the Escherichia coli species results in highly diverse adaptive paths.</title>
        <authorList>
            <person name="Touchon M."/>
            <person name="Hoede C."/>
            <person name="Tenaillon O."/>
            <person name="Barbe V."/>
            <person name="Baeriswyl S."/>
            <person name="Bidet P."/>
            <person name="Bingen E."/>
            <person name="Bonacorsi S."/>
            <person name="Bouchier C."/>
            <person name="Bouvet O."/>
            <person name="Calteau A."/>
            <person name="Chiapello H."/>
            <person name="Clermont O."/>
            <person name="Cruveiller S."/>
            <person name="Danchin A."/>
            <person name="Diard M."/>
            <person name="Dossat C."/>
            <person name="Karoui M.E."/>
            <person name="Frapy E."/>
            <person name="Garry L."/>
            <person name="Ghigo J.M."/>
            <person name="Gilles A.M."/>
            <person name="Johnson J."/>
            <person name="Le Bouguenec C."/>
            <person name="Lescat M."/>
            <person name="Mangenot S."/>
            <person name="Martinez-Jehanne V."/>
            <person name="Matic I."/>
            <person name="Nassif X."/>
            <person name="Oztas S."/>
            <person name="Petit M.A."/>
            <person name="Pichon C."/>
            <person name="Rouy Z."/>
            <person name="Ruf C.S."/>
            <person name="Schneider D."/>
            <person name="Tourret J."/>
            <person name="Vacherie B."/>
            <person name="Vallenet D."/>
            <person name="Medigue C."/>
            <person name="Rocha E.P.C."/>
            <person name="Denamur E."/>
        </authorList>
    </citation>
    <scope>NUCLEOTIDE SEQUENCE [LARGE SCALE GENOMIC DNA]</scope>
    <source>
        <strain>ED1a</strain>
    </source>
</reference>
<accession>B7MVL9</accession>
<sequence>MTLQQQIIKALGAKPQINAEEEIRRSVDFLKSYLQTYPFIKSLVLGISGGQDSTLAGKLCQMAINELRQETGNESLQFIAVRLPYGVQADEQDCQDAIAFIQPDRVLTVNIKGAVLASEQALREAGIELSDFVRGNEKARERMKAQYSIAGMTSGVVVGTDHAAEAITGFFTKYGDGGTDINPLYRLNKRQGKQLLAALGCPEHLYKKAPTADLEDDRPSLPDEVALGVTYDNIDDYLEGKNVPEQVARTIENWYLKTEHKRRPPITVFDDFWKK</sequence>
<proteinExistence type="inferred from homology"/>
<gene>
    <name evidence="1" type="primary">nadE</name>
    <name type="ordered locus">ECED1_1942</name>
</gene>
<feature type="chain" id="PRO_1000191502" description="NH(3)-dependent NAD(+) synthetase">
    <location>
        <begin position="1"/>
        <end position="275"/>
    </location>
</feature>
<feature type="binding site" evidence="1">
    <location>
        <begin position="46"/>
        <end position="53"/>
    </location>
    <ligand>
        <name>ATP</name>
        <dbReference type="ChEBI" id="CHEBI:30616"/>
    </ligand>
</feature>
<feature type="binding site" evidence="1">
    <location>
        <position position="52"/>
    </location>
    <ligand>
        <name>Mg(2+)</name>
        <dbReference type="ChEBI" id="CHEBI:18420"/>
    </ligand>
</feature>
<feature type="binding site" evidence="1">
    <location>
        <position position="140"/>
    </location>
    <ligand>
        <name>deamido-NAD(+)</name>
        <dbReference type="ChEBI" id="CHEBI:58437"/>
    </ligand>
</feature>
<feature type="binding site" evidence="1">
    <location>
        <position position="160"/>
    </location>
    <ligand>
        <name>ATP</name>
        <dbReference type="ChEBI" id="CHEBI:30616"/>
    </ligand>
</feature>
<feature type="binding site" evidence="1">
    <location>
        <position position="165"/>
    </location>
    <ligand>
        <name>Mg(2+)</name>
        <dbReference type="ChEBI" id="CHEBI:18420"/>
    </ligand>
</feature>
<feature type="binding site" evidence="1">
    <location>
        <position position="173"/>
    </location>
    <ligand>
        <name>deamido-NAD(+)</name>
        <dbReference type="ChEBI" id="CHEBI:58437"/>
    </ligand>
</feature>
<feature type="binding site" evidence="1">
    <location>
        <position position="180"/>
    </location>
    <ligand>
        <name>deamido-NAD(+)</name>
        <dbReference type="ChEBI" id="CHEBI:58437"/>
    </ligand>
</feature>
<feature type="binding site" evidence="1">
    <location>
        <position position="189"/>
    </location>
    <ligand>
        <name>ATP</name>
        <dbReference type="ChEBI" id="CHEBI:30616"/>
    </ligand>
</feature>
<feature type="binding site" evidence="1">
    <location>
        <position position="211"/>
    </location>
    <ligand>
        <name>ATP</name>
        <dbReference type="ChEBI" id="CHEBI:30616"/>
    </ligand>
</feature>
<feature type="binding site" evidence="1">
    <location>
        <begin position="260"/>
        <end position="261"/>
    </location>
    <ligand>
        <name>deamido-NAD(+)</name>
        <dbReference type="ChEBI" id="CHEBI:58437"/>
    </ligand>
</feature>
<name>NADE_ECO81</name>
<keyword id="KW-0067">ATP-binding</keyword>
<keyword id="KW-0436">Ligase</keyword>
<keyword id="KW-0460">Magnesium</keyword>
<keyword id="KW-0479">Metal-binding</keyword>
<keyword id="KW-0520">NAD</keyword>
<keyword id="KW-0547">Nucleotide-binding</keyword>
<evidence type="ECO:0000255" key="1">
    <source>
        <dbReference type="HAMAP-Rule" id="MF_00193"/>
    </source>
</evidence>
<comment type="function">
    <text evidence="1">Catalyzes the ATP-dependent amidation of deamido-NAD to form NAD. Uses ammonia as a nitrogen source.</text>
</comment>
<comment type="catalytic activity">
    <reaction evidence="1">
        <text>deamido-NAD(+) + NH4(+) + ATP = AMP + diphosphate + NAD(+) + H(+)</text>
        <dbReference type="Rhea" id="RHEA:21188"/>
        <dbReference type="ChEBI" id="CHEBI:15378"/>
        <dbReference type="ChEBI" id="CHEBI:28938"/>
        <dbReference type="ChEBI" id="CHEBI:30616"/>
        <dbReference type="ChEBI" id="CHEBI:33019"/>
        <dbReference type="ChEBI" id="CHEBI:57540"/>
        <dbReference type="ChEBI" id="CHEBI:58437"/>
        <dbReference type="ChEBI" id="CHEBI:456215"/>
        <dbReference type="EC" id="6.3.1.5"/>
    </reaction>
</comment>
<comment type="pathway">
    <text evidence="1">Cofactor biosynthesis; NAD(+) biosynthesis; NAD(+) from deamido-NAD(+) (ammonia route): step 1/1.</text>
</comment>
<comment type="subunit">
    <text evidence="1">Homodimer.</text>
</comment>
<comment type="similarity">
    <text evidence="1">Belongs to the NAD synthetase family.</text>
</comment>
<protein>
    <recommendedName>
        <fullName evidence="1">NH(3)-dependent NAD(+) synthetase</fullName>
        <ecNumber evidence="1">6.3.1.5</ecNumber>
    </recommendedName>
</protein>